<dbReference type="EMBL" id="CP000548">
    <property type="protein sequence ID" value="ABO06749.1"/>
    <property type="molecule type" value="Genomic_DNA"/>
</dbReference>
<dbReference type="RefSeq" id="WP_004197388.1">
    <property type="nucleotide sequence ID" value="NZ_CP007802.1"/>
</dbReference>
<dbReference type="SMR" id="A3MJW4"/>
<dbReference type="GeneID" id="92978809"/>
<dbReference type="KEGG" id="bmaz:BM44_2095"/>
<dbReference type="KEGG" id="bmn:BMA10247_0991"/>
<dbReference type="PATRIC" id="fig|320389.8.peg.2350"/>
<dbReference type="GO" id="GO:0005829">
    <property type="term" value="C:cytosol"/>
    <property type="evidence" value="ECO:0007669"/>
    <property type="project" value="TreeGrafter"/>
</dbReference>
<dbReference type="GO" id="GO:0005525">
    <property type="term" value="F:GTP binding"/>
    <property type="evidence" value="ECO:0007669"/>
    <property type="project" value="UniProtKB-KW"/>
</dbReference>
<dbReference type="GO" id="GO:0003924">
    <property type="term" value="F:GTPase activity"/>
    <property type="evidence" value="ECO:0007669"/>
    <property type="project" value="UniProtKB-UniRule"/>
</dbReference>
<dbReference type="GO" id="GO:0097216">
    <property type="term" value="F:guanosine tetraphosphate binding"/>
    <property type="evidence" value="ECO:0007669"/>
    <property type="project" value="UniProtKB-ARBA"/>
</dbReference>
<dbReference type="GO" id="GO:0003743">
    <property type="term" value="F:translation initiation factor activity"/>
    <property type="evidence" value="ECO:0007669"/>
    <property type="project" value="UniProtKB-UniRule"/>
</dbReference>
<dbReference type="CDD" id="cd01887">
    <property type="entry name" value="IF2_eIF5B"/>
    <property type="match status" value="1"/>
</dbReference>
<dbReference type="CDD" id="cd03702">
    <property type="entry name" value="IF2_mtIF2_II"/>
    <property type="match status" value="1"/>
</dbReference>
<dbReference type="CDD" id="cd03692">
    <property type="entry name" value="mtIF2_IVc"/>
    <property type="match status" value="1"/>
</dbReference>
<dbReference type="FunFam" id="2.40.30.10:FF:000007">
    <property type="entry name" value="Translation initiation factor IF-2"/>
    <property type="match status" value="1"/>
</dbReference>
<dbReference type="FunFam" id="2.40.30.10:FF:000008">
    <property type="entry name" value="Translation initiation factor IF-2"/>
    <property type="match status" value="1"/>
</dbReference>
<dbReference type="FunFam" id="3.40.50.10050:FF:000001">
    <property type="entry name" value="Translation initiation factor IF-2"/>
    <property type="match status" value="1"/>
</dbReference>
<dbReference type="FunFam" id="3.40.50.300:FF:000019">
    <property type="entry name" value="Translation initiation factor IF-2"/>
    <property type="match status" value="1"/>
</dbReference>
<dbReference type="Gene3D" id="3.40.50.300">
    <property type="entry name" value="P-loop containing nucleotide triphosphate hydrolases"/>
    <property type="match status" value="1"/>
</dbReference>
<dbReference type="Gene3D" id="3.30.56.50">
    <property type="entry name" value="Putative DNA-binding domain, N-terminal subdomain of bacterial translation initiation factor IF2"/>
    <property type="match status" value="1"/>
</dbReference>
<dbReference type="Gene3D" id="2.40.30.10">
    <property type="entry name" value="Translation factors"/>
    <property type="match status" value="2"/>
</dbReference>
<dbReference type="Gene3D" id="3.40.50.10050">
    <property type="entry name" value="Translation initiation factor IF- 2, domain 3"/>
    <property type="match status" value="1"/>
</dbReference>
<dbReference type="HAMAP" id="MF_00100_B">
    <property type="entry name" value="IF_2_B"/>
    <property type="match status" value="1"/>
</dbReference>
<dbReference type="InterPro" id="IPR009061">
    <property type="entry name" value="DNA-bd_dom_put_sf"/>
</dbReference>
<dbReference type="InterPro" id="IPR053905">
    <property type="entry name" value="EF-G-like_DII"/>
</dbReference>
<dbReference type="InterPro" id="IPR004161">
    <property type="entry name" value="EFTu-like_2"/>
</dbReference>
<dbReference type="InterPro" id="IPR013575">
    <property type="entry name" value="IF2_assoc_dom_bac"/>
</dbReference>
<dbReference type="InterPro" id="IPR044145">
    <property type="entry name" value="IF2_II"/>
</dbReference>
<dbReference type="InterPro" id="IPR006847">
    <property type="entry name" value="IF2_N"/>
</dbReference>
<dbReference type="InterPro" id="IPR027417">
    <property type="entry name" value="P-loop_NTPase"/>
</dbReference>
<dbReference type="InterPro" id="IPR005225">
    <property type="entry name" value="Small_GTP-bd"/>
</dbReference>
<dbReference type="InterPro" id="IPR000795">
    <property type="entry name" value="T_Tr_GTP-bd_dom"/>
</dbReference>
<dbReference type="InterPro" id="IPR000178">
    <property type="entry name" value="TF_IF2_bacterial-like"/>
</dbReference>
<dbReference type="InterPro" id="IPR015760">
    <property type="entry name" value="TIF_IF2"/>
</dbReference>
<dbReference type="InterPro" id="IPR023115">
    <property type="entry name" value="TIF_IF2_dom3"/>
</dbReference>
<dbReference type="InterPro" id="IPR036925">
    <property type="entry name" value="TIF_IF2_dom3_sf"/>
</dbReference>
<dbReference type="InterPro" id="IPR009000">
    <property type="entry name" value="Transl_B-barrel_sf"/>
</dbReference>
<dbReference type="NCBIfam" id="TIGR00487">
    <property type="entry name" value="IF-2"/>
    <property type="match status" value="1"/>
</dbReference>
<dbReference type="NCBIfam" id="TIGR00231">
    <property type="entry name" value="small_GTP"/>
    <property type="match status" value="1"/>
</dbReference>
<dbReference type="PANTHER" id="PTHR43381:SF5">
    <property type="entry name" value="TR-TYPE G DOMAIN-CONTAINING PROTEIN"/>
    <property type="match status" value="1"/>
</dbReference>
<dbReference type="PANTHER" id="PTHR43381">
    <property type="entry name" value="TRANSLATION INITIATION FACTOR IF-2-RELATED"/>
    <property type="match status" value="1"/>
</dbReference>
<dbReference type="Pfam" id="PF22042">
    <property type="entry name" value="EF-G_D2"/>
    <property type="match status" value="1"/>
</dbReference>
<dbReference type="Pfam" id="PF00009">
    <property type="entry name" value="GTP_EFTU"/>
    <property type="match status" value="1"/>
</dbReference>
<dbReference type="Pfam" id="PF03144">
    <property type="entry name" value="GTP_EFTU_D2"/>
    <property type="match status" value="1"/>
</dbReference>
<dbReference type="Pfam" id="PF11987">
    <property type="entry name" value="IF-2"/>
    <property type="match status" value="1"/>
</dbReference>
<dbReference type="Pfam" id="PF08364">
    <property type="entry name" value="IF2_assoc"/>
    <property type="match status" value="1"/>
</dbReference>
<dbReference type="Pfam" id="PF04760">
    <property type="entry name" value="IF2_N"/>
    <property type="match status" value="2"/>
</dbReference>
<dbReference type="SUPFAM" id="SSF52156">
    <property type="entry name" value="Initiation factor IF2/eIF5b, domain 3"/>
    <property type="match status" value="1"/>
</dbReference>
<dbReference type="SUPFAM" id="SSF52540">
    <property type="entry name" value="P-loop containing nucleoside triphosphate hydrolases"/>
    <property type="match status" value="1"/>
</dbReference>
<dbReference type="SUPFAM" id="SSF46955">
    <property type="entry name" value="Putative DNA-binding domain"/>
    <property type="match status" value="1"/>
</dbReference>
<dbReference type="SUPFAM" id="SSF50447">
    <property type="entry name" value="Translation proteins"/>
    <property type="match status" value="2"/>
</dbReference>
<dbReference type="PROSITE" id="PS51722">
    <property type="entry name" value="G_TR_2"/>
    <property type="match status" value="1"/>
</dbReference>
<dbReference type="PROSITE" id="PS01176">
    <property type="entry name" value="IF2"/>
    <property type="match status" value="1"/>
</dbReference>
<feature type="chain" id="PRO_1000008211" description="Translation initiation factor IF-2">
    <location>
        <begin position="1"/>
        <end position="975"/>
    </location>
</feature>
<feature type="domain" description="tr-type G">
    <location>
        <begin position="475"/>
        <end position="644"/>
    </location>
</feature>
<feature type="region of interest" description="Disordered" evidence="3">
    <location>
        <begin position="48"/>
        <end position="84"/>
    </location>
</feature>
<feature type="region of interest" description="Disordered" evidence="3">
    <location>
        <begin position="98"/>
        <end position="388"/>
    </location>
</feature>
<feature type="region of interest" description="G1" evidence="1">
    <location>
        <begin position="484"/>
        <end position="491"/>
    </location>
</feature>
<feature type="region of interest" description="G2" evidence="1">
    <location>
        <begin position="509"/>
        <end position="513"/>
    </location>
</feature>
<feature type="region of interest" description="G3" evidence="1">
    <location>
        <begin position="530"/>
        <end position="533"/>
    </location>
</feature>
<feature type="region of interest" description="G4" evidence="1">
    <location>
        <begin position="584"/>
        <end position="587"/>
    </location>
</feature>
<feature type="region of interest" description="G5" evidence="1">
    <location>
        <begin position="620"/>
        <end position="622"/>
    </location>
</feature>
<feature type="compositionally biased region" description="Basic and acidic residues" evidence="3">
    <location>
        <begin position="48"/>
        <end position="63"/>
    </location>
</feature>
<feature type="compositionally biased region" description="Low complexity" evidence="3">
    <location>
        <begin position="104"/>
        <end position="115"/>
    </location>
</feature>
<feature type="compositionally biased region" description="Basic and acidic residues" evidence="3">
    <location>
        <begin position="120"/>
        <end position="177"/>
    </location>
</feature>
<feature type="compositionally biased region" description="Low complexity" evidence="3">
    <location>
        <begin position="178"/>
        <end position="211"/>
    </location>
</feature>
<feature type="compositionally biased region" description="Basic and acidic residues" evidence="3">
    <location>
        <begin position="212"/>
        <end position="263"/>
    </location>
</feature>
<feature type="compositionally biased region" description="Low complexity" evidence="3">
    <location>
        <begin position="302"/>
        <end position="330"/>
    </location>
</feature>
<feature type="compositionally biased region" description="Gly residues" evidence="3">
    <location>
        <begin position="359"/>
        <end position="372"/>
    </location>
</feature>
<feature type="binding site" evidence="2">
    <location>
        <begin position="484"/>
        <end position="491"/>
    </location>
    <ligand>
        <name>GTP</name>
        <dbReference type="ChEBI" id="CHEBI:37565"/>
    </ligand>
</feature>
<feature type="binding site" evidence="2">
    <location>
        <begin position="530"/>
        <end position="534"/>
    </location>
    <ligand>
        <name>GTP</name>
        <dbReference type="ChEBI" id="CHEBI:37565"/>
    </ligand>
</feature>
<feature type="binding site" evidence="2">
    <location>
        <begin position="584"/>
        <end position="587"/>
    </location>
    <ligand>
        <name>GTP</name>
        <dbReference type="ChEBI" id="CHEBI:37565"/>
    </ligand>
</feature>
<sequence>MASNNVAQFAAELKMPAGVLLEQLQAAGVQKASEDDALSETDKARLLDHLRKSHGATDGDKRKITLTRRHTSEIKQADATGKARTIQVEVRKKRTFVKRDDVSETGADQAQAQTDEQAEAELKRREEEARREAELLEKQAQELRERQERLEREEAERRAREEAAEAERRRAEEEAAAKRAAAAQAEAAQQAAAAREQAQRAQSEPAEQSAQDEARAAAERAAQREAAKKAEDAAREAADKARAEQEEIRKRREAAEAEARAIREMMNTPRRAQVKAVEPPKPAEPPAAKAAEAKGTLHKPAKPAGEAAAARPAAKKPASGAPAPAAAPAGDRTKKPGTGKSGWQDDAAKRRGIKTRGDSSGGVDRGWRGGPKGRGKHQDSASSFQAPTEPIVREVHVPETISVADLAHKMSIKASEVIKVMMKMGQMVTINQVLDQETAMIVVEELGHRALAAKLDDPEALLVEGEIGSDAEQLPRPPVVTVMGHVDHGKTSLLDYIRRAKVAAGEAGGITQHIGAYHVETPRGVVTFLDTPGHEAFTAMRARGAKATDIVILVVAADDGVMPQTKEAISHAKAGGVPIVVAINKIDKPEANPDRVKQELVAEGVVPEEYGGDSPFVPVSAKTGAGIDDLLENVLLQAEVLELKAPVESPAKGIVIEAKLDKGKGPVATVLVQSGTLSRGDVVLAGTAYGRVRAMLDENGKPTKEAGPSIPVEIQGLSEVPGAGDEVIVLPDERKAREIALFRQGKFRDVKLAKQQAAKLESMLEQMGEGEVQNLPLIIKADVQGSQEALVQSLLKLSTDEVRVQIVHSAVGGISESDVNLATASKAVIIGFNTRADAQARKLAEANGIDIRYYNIIYDAVDEVKAAMSGMLAPEKREVVTGMVEVRQVFKVPKVGTVAGCMVTDGVVKRSSSVRVLRNNVVIFTGELDSLKRFKDDVKEVKQGFECGMSLKNFNDIVEGDQFEVFEVTEVARTL</sequence>
<comment type="function">
    <text evidence="2">One of the essential components for the initiation of protein synthesis. Protects formylmethionyl-tRNA from spontaneous hydrolysis and promotes its binding to the 30S ribosomal subunits. Also involved in the hydrolysis of GTP during the formation of the 70S ribosomal complex.</text>
</comment>
<comment type="subcellular location">
    <subcellularLocation>
        <location evidence="2">Cytoplasm</location>
    </subcellularLocation>
</comment>
<comment type="similarity">
    <text evidence="2">Belongs to the TRAFAC class translation factor GTPase superfamily. Classic translation factor GTPase family. IF-2 subfamily.</text>
</comment>
<keyword id="KW-0963">Cytoplasm</keyword>
<keyword id="KW-0342">GTP-binding</keyword>
<keyword id="KW-0396">Initiation factor</keyword>
<keyword id="KW-0547">Nucleotide-binding</keyword>
<keyword id="KW-0648">Protein biosynthesis</keyword>
<name>IF2_BURM7</name>
<organism>
    <name type="scientific">Burkholderia mallei (strain NCTC 10247)</name>
    <dbReference type="NCBI Taxonomy" id="320389"/>
    <lineage>
        <taxon>Bacteria</taxon>
        <taxon>Pseudomonadati</taxon>
        <taxon>Pseudomonadota</taxon>
        <taxon>Betaproteobacteria</taxon>
        <taxon>Burkholderiales</taxon>
        <taxon>Burkholderiaceae</taxon>
        <taxon>Burkholderia</taxon>
        <taxon>pseudomallei group</taxon>
    </lineage>
</organism>
<evidence type="ECO:0000250" key="1"/>
<evidence type="ECO:0000255" key="2">
    <source>
        <dbReference type="HAMAP-Rule" id="MF_00100"/>
    </source>
</evidence>
<evidence type="ECO:0000256" key="3">
    <source>
        <dbReference type="SAM" id="MobiDB-lite"/>
    </source>
</evidence>
<protein>
    <recommendedName>
        <fullName evidence="2">Translation initiation factor IF-2</fullName>
    </recommendedName>
</protein>
<gene>
    <name evidence="2" type="primary">infB</name>
    <name type="ordered locus">BMA10247_0991</name>
</gene>
<reference key="1">
    <citation type="journal article" date="2010" name="Genome Biol. Evol.">
        <title>Continuing evolution of Burkholderia mallei through genome reduction and large-scale rearrangements.</title>
        <authorList>
            <person name="Losada L."/>
            <person name="Ronning C.M."/>
            <person name="DeShazer D."/>
            <person name="Woods D."/>
            <person name="Fedorova N."/>
            <person name="Kim H.S."/>
            <person name="Shabalina S.A."/>
            <person name="Pearson T.R."/>
            <person name="Brinkac L."/>
            <person name="Tan P."/>
            <person name="Nandi T."/>
            <person name="Crabtree J."/>
            <person name="Badger J."/>
            <person name="Beckstrom-Sternberg S."/>
            <person name="Saqib M."/>
            <person name="Schutzer S.E."/>
            <person name="Keim P."/>
            <person name="Nierman W.C."/>
        </authorList>
    </citation>
    <scope>NUCLEOTIDE SEQUENCE [LARGE SCALE GENOMIC DNA]</scope>
    <source>
        <strain>NCTC 10247</strain>
    </source>
</reference>
<proteinExistence type="inferred from homology"/>
<accession>A3MJW4</accession>